<gene>
    <name type="ordered locus">RP484</name>
</gene>
<sequence length="110" mass="12242">MKNVISLTDAAAKQVKLLIEKRAKPTFGIRVGIKSGGCAGQTYYVEYADNKNQFDEVVEEKGVRILIDPKTLMYILGSEMDYVETNFKSQFTFTNPNEKANCGCGKSFSV</sequence>
<comment type="similarity">
    <text evidence="1">Belongs to the HesB/IscA family.</text>
</comment>
<protein>
    <recommendedName>
        <fullName>Uncharacterized protein RP484</fullName>
    </recommendedName>
</protein>
<dbReference type="EMBL" id="AJ235272">
    <property type="protein sequence ID" value="CAA14937.1"/>
    <property type="molecule type" value="Genomic_DNA"/>
</dbReference>
<dbReference type="PIR" id="G71651">
    <property type="entry name" value="G71651"/>
</dbReference>
<dbReference type="RefSeq" id="NP_220861.1">
    <property type="nucleotide sequence ID" value="NC_000963.1"/>
</dbReference>
<dbReference type="RefSeq" id="WP_004597725.1">
    <property type="nucleotide sequence ID" value="NC_000963.1"/>
</dbReference>
<dbReference type="SMR" id="Q9ZD62"/>
<dbReference type="STRING" id="272947.gene:17555564"/>
<dbReference type="EnsemblBacteria" id="CAA14937">
    <property type="protein sequence ID" value="CAA14937"/>
    <property type="gene ID" value="CAA14937"/>
</dbReference>
<dbReference type="KEGG" id="rpr:RP484"/>
<dbReference type="PATRIC" id="fig|272947.5.peg.494"/>
<dbReference type="eggNOG" id="COG0316">
    <property type="taxonomic scope" value="Bacteria"/>
</dbReference>
<dbReference type="HOGENOM" id="CLU_069054_4_2_5"/>
<dbReference type="OrthoDB" id="9801228at2"/>
<dbReference type="Proteomes" id="UP000002480">
    <property type="component" value="Chromosome"/>
</dbReference>
<dbReference type="GO" id="GO:0005737">
    <property type="term" value="C:cytoplasm"/>
    <property type="evidence" value="ECO:0007669"/>
    <property type="project" value="TreeGrafter"/>
</dbReference>
<dbReference type="GO" id="GO:0051537">
    <property type="term" value="F:2 iron, 2 sulfur cluster binding"/>
    <property type="evidence" value="ECO:0007669"/>
    <property type="project" value="TreeGrafter"/>
</dbReference>
<dbReference type="GO" id="GO:0016226">
    <property type="term" value="P:iron-sulfur cluster assembly"/>
    <property type="evidence" value="ECO:0007669"/>
    <property type="project" value="InterPro"/>
</dbReference>
<dbReference type="FunFam" id="2.60.300.12:FF:000001">
    <property type="entry name" value="Iron-binding protein IscA"/>
    <property type="match status" value="1"/>
</dbReference>
<dbReference type="Gene3D" id="2.60.300.12">
    <property type="entry name" value="HesB-like domain"/>
    <property type="match status" value="1"/>
</dbReference>
<dbReference type="InterPro" id="IPR050322">
    <property type="entry name" value="Fe-S_cluster_asmbl/transfer"/>
</dbReference>
<dbReference type="InterPro" id="IPR000361">
    <property type="entry name" value="FeS_biogenesis"/>
</dbReference>
<dbReference type="InterPro" id="IPR016092">
    <property type="entry name" value="FeS_cluster_insertion"/>
</dbReference>
<dbReference type="InterPro" id="IPR017870">
    <property type="entry name" value="FeS_cluster_insertion_CS"/>
</dbReference>
<dbReference type="InterPro" id="IPR035903">
    <property type="entry name" value="HesB-like_dom_sf"/>
</dbReference>
<dbReference type="NCBIfam" id="TIGR00049">
    <property type="entry name" value="iron-sulfur cluster assembly accessory protein"/>
    <property type="match status" value="1"/>
</dbReference>
<dbReference type="PANTHER" id="PTHR10072:SF41">
    <property type="entry name" value="IRON-SULFUR CLUSTER ASSEMBLY 1 HOMOLOG, MITOCHONDRIAL"/>
    <property type="match status" value="1"/>
</dbReference>
<dbReference type="PANTHER" id="PTHR10072">
    <property type="entry name" value="IRON-SULFUR CLUSTER ASSEMBLY PROTEIN"/>
    <property type="match status" value="1"/>
</dbReference>
<dbReference type="Pfam" id="PF01521">
    <property type="entry name" value="Fe-S_biosyn"/>
    <property type="match status" value="1"/>
</dbReference>
<dbReference type="SUPFAM" id="SSF89360">
    <property type="entry name" value="HesB-like domain"/>
    <property type="match status" value="1"/>
</dbReference>
<dbReference type="PROSITE" id="PS01152">
    <property type="entry name" value="HESB"/>
    <property type="match status" value="1"/>
</dbReference>
<keyword id="KW-1185">Reference proteome</keyword>
<name>Y484_RICPR</name>
<feature type="chain" id="PRO_0000077021" description="Uncharacterized protein RP484">
    <location>
        <begin position="1"/>
        <end position="110"/>
    </location>
</feature>
<accession>Q9ZD62</accession>
<organism>
    <name type="scientific">Rickettsia prowazekii (strain Madrid E)</name>
    <dbReference type="NCBI Taxonomy" id="272947"/>
    <lineage>
        <taxon>Bacteria</taxon>
        <taxon>Pseudomonadati</taxon>
        <taxon>Pseudomonadota</taxon>
        <taxon>Alphaproteobacteria</taxon>
        <taxon>Rickettsiales</taxon>
        <taxon>Rickettsiaceae</taxon>
        <taxon>Rickettsieae</taxon>
        <taxon>Rickettsia</taxon>
        <taxon>typhus group</taxon>
    </lineage>
</organism>
<proteinExistence type="inferred from homology"/>
<reference key="1">
    <citation type="journal article" date="1998" name="Nature">
        <title>The genome sequence of Rickettsia prowazekii and the origin of mitochondria.</title>
        <authorList>
            <person name="Andersson S.G.E."/>
            <person name="Zomorodipour A."/>
            <person name="Andersson J.O."/>
            <person name="Sicheritz-Ponten T."/>
            <person name="Alsmark U.C.M."/>
            <person name="Podowski R.M."/>
            <person name="Naeslund A.K."/>
            <person name="Eriksson A.-S."/>
            <person name="Winkler H.H."/>
            <person name="Kurland C.G."/>
        </authorList>
    </citation>
    <scope>NUCLEOTIDE SEQUENCE [LARGE SCALE GENOMIC DNA]</scope>
    <source>
        <strain>Madrid E</strain>
    </source>
</reference>
<evidence type="ECO:0000305" key="1"/>